<reference key="1">
    <citation type="journal article" date="2004" name="Proc. Natl. Acad. Sci. U.S.A.">
        <title>Genome sequence of Picrophilus torridus and its implications for life around pH 0.</title>
        <authorList>
            <person name="Fuetterer O."/>
            <person name="Angelov A."/>
            <person name="Liesegang H."/>
            <person name="Gottschalk G."/>
            <person name="Schleper C."/>
            <person name="Schepers B."/>
            <person name="Dock C."/>
            <person name="Antranikian G."/>
            <person name="Liebl W."/>
        </authorList>
    </citation>
    <scope>NUCLEOTIDE SEQUENCE [LARGE SCALE GENOMIC DNA]</scope>
    <source>
        <strain>ATCC 700027 / DSM 9790 / JCM 10055 / NBRC 100828 / KAW 2/3</strain>
    </source>
</reference>
<name>GGR_PICTO</name>
<proteinExistence type="inferred from homology"/>
<sequence>MEVNYDVLVIGAGPAGSSAARFAARKGLKTLLIEKRPDIGSPVRCGEGVSKSWMPEVELKPEDHWISDEVKGARIYGPSEKKPIMLTAENAGNEVGYVVERDKFDKHIAALAASEGADVWVKSPALSVIKDGNRIVGAKVRHNSEIVDVRAKMVIAADGFESEFGRWAGLKSLILAKNDIISCVEYRMINVDSDEDYTDFYLGSCAPAGYIWVFPKGKHEANVGIGVTISKMRDRFDVKNYLDAFIKSHPGYSKGKTIQLITGGVSVSKVRDKFTLPGLLTVGDAARLIDPITGGGIANGMISGKYAAEVSKKAIDNEDYSQEMMNNYERMVKDKFERKHLRNWFAKEKLGTLSDETLDKLVDVIADVKINEISVEEILKAVQLKYPELVEELESLI</sequence>
<protein>
    <recommendedName>
        <fullName evidence="1">Digeranylgeranylglycerophospholipid reductase</fullName>
        <shortName evidence="1">DGGGPL reductase</shortName>
        <ecNumber evidence="1">1.3.1.101</ecNumber>
    </recommendedName>
    <alternativeName>
        <fullName evidence="1">2,3-bis-O-geranylgeranylglyceryl phosphate reductase</fullName>
    </alternativeName>
    <alternativeName>
        <fullName evidence="1">Geranylgeranyl reductase</fullName>
        <shortName evidence="1">GGR</shortName>
    </alternativeName>
</protein>
<feature type="chain" id="PRO_0000351474" description="Digeranylgeranylglycerophospholipid reductase">
    <location>
        <begin position="1"/>
        <end position="397"/>
    </location>
</feature>
<feature type="binding site" evidence="1">
    <location>
        <position position="15"/>
    </location>
    <ligand>
        <name>FAD</name>
        <dbReference type="ChEBI" id="CHEBI:57692"/>
    </ligand>
</feature>
<feature type="binding site" evidence="1">
    <location>
        <position position="34"/>
    </location>
    <ligand>
        <name>FAD</name>
        <dbReference type="ChEBI" id="CHEBI:57692"/>
    </ligand>
</feature>
<feature type="binding site" evidence="1">
    <location>
        <position position="45"/>
    </location>
    <ligand>
        <name>FAD</name>
        <dbReference type="ChEBI" id="CHEBI:57692"/>
    </ligand>
</feature>
<feature type="binding site" evidence="1">
    <location>
        <position position="46"/>
    </location>
    <ligand>
        <name>FAD</name>
        <dbReference type="ChEBI" id="CHEBI:57692"/>
    </ligand>
</feature>
<feature type="binding site" evidence="1">
    <location>
        <position position="48"/>
    </location>
    <ligand>
        <name>FAD</name>
        <dbReference type="ChEBI" id="CHEBI:57692"/>
    </ligand>
</feature>
<feature type="binding site" evidence="1">
    <location>
        <position position="101"/>
    </location>
    <ligand>
        <name>FAD</name>
        <dbReference type="ChEBI" id="CHEBI:57692"/>
    </ligand>
</feature>
<feature type="binding site" evidence="1">
    <location>
        <position position="125"/>
    </location>
    <ligand>
        <name>FAD</name>
        <dbReference type="ChEBI" id="CHEBI:57692"/>
    </ligand>
</feature>
<feature type="binding site" evidence="1">
    <location>
        <position position="163"/>
    </location>
    <ligand>
        <name>FAD</name>
        <dbReference type="ChEBI" id="CHEBI:57692"/>
    </ligand>
</feature>
<feature type="binding site" evidence="1">
    <location>
        <position position="284"/>
    </location>
    <ligand>
        <name>FAD</name>
        <dbReference type="ChEBI" id="CHEBI:57692"/>
    </ligand>
</feature>
<feature type="binding site" evidence="1">
    <location>
        <position position="296"/>
    </location>
    <ligand>
        <name>FAD</name>
        <dbReference type="ChEBI" id="CHEBI:57692"/>
    </ligand>
</feature>
<feature type="binding site" evidence="1">
    <location>
        <position position="297"/>
    </location>
    <ligand>
        <name>FAD</name>
        <dbReference type="ChEBI" id="CHEBI:57692"/>
    </ligand>
</feature>
<feature type="binding site" evidence="1">
    <location>
        <position position="339"/>
    </location>
    <ligand>
        <name>a 2,3-bis-O-(geranylgeranyl)-sn-glycerol 1-phospholipid</name>
        <dbReference type="ChEBI" id="CHEBI:138140"/>
    </ligand>
</feature>
<feature type="binding site" evidence="1">
    <location>
        <position position="375"/>
    </location>
    <ligand>
        <name>a 2,3-bis-O-(geranylgeranyl)-sn-glycerol 1-phospholipid</name>
        <dbReference type="ChEBI" id="CHEBI:138140"/>
    </ligand>
</feature>
<gene>
    <name type="ordered locus">PTO0896</name>
</gene>
<organism>
    <name type="scientific">Picrophilus torridus (strain ATCC 700027 / DSM 9790 / JCM 10055 / NBRC 100828 / KAW 2/3)</name>
    <dbReference type="NCBI Taxonomy" id="1122961"/>
    <lineage>
        <taxon>Archaea</taxon>
        <taxon>Methanobacteriati</taxon>
        <taxon>Thermoplasmatota</taxon>
        <taxon>Thermoplasmata</taxon>
        <taxon>Thermoplasmatales</taxon>
        <taxon>Picrophilaceae</taxon>
        <taxon>Picrophilus</taxon>
    </lineage>
</organism>
<comment type="function">
    <text evidence="1">Is involved in the reduction of 2,3-digeranylgeranylglycerophospholipids (unsaturated archaeols) into 2,3-diphytanylglycerophospholipids (saturated archaeols) in the biosynthesis of archaeal membrane lipids. Catalyzes the formation of archaetidic acid (2,3-di-O-phytanyl-sn-glyceryl phosphate) from 2,3-di-O-geranylgeranylglyceryl phosphate (DGGGP) via the hydrogenation of each double bond of the isoprenoid chains. Is also probably able to reduce double bonds of geranyl groups in CDP-2,3-bis-O-(geranylgeranyl)-sn-glycerol and archaetidylserine, thus acting at various stages in the biosynthesis of archaeal membrane lipids.</text>
</comment>
<comment type="catalytic activity">
    <reaction evidence="1">
        <text>2,3-bis-O-(phytanyl)-sn-glycerol 1-phosphate + 8 NADP(+) = 2,3-bis-O-(geranylgeranyl)-sn-glycerol 1-phosphate + 8 NADPH + 8 H(+)</text>
        <dbReference type="Rhea" id="RHEA:36035"/>
        <dbReference type="ChEBI" id="CHEBI:15378"/>
        <dbReference type="ChEBI" id="CHEBI:57783"/>
        <dbReference type="ChEBI" id="CHEBI:58349"/>
        <dbReference type="ChEBI" id="CHEBI:58837"/>
        <dbReference type="ChEBI" id="CHEBI:73125"/>
        <dbReference type="EC" id="1.3.1.101"/>
    </reaction>
    <physiologicalReaction direction="right-to-left" evidence="1">
        <dbReference type="Rhea" id="RHEA:36037"/>
    </physiologicalReaction>
</comment>
<comment type="catalytic activity">
    <reaction evidence="1">
        <text>2,3-bis-O-(phytanyl)-sn-glycerol 1-phosphate + 8 NAD(+) = 2,3-bis-O-(geranylgeranyl)-sn-glycerol 1-phosphate + 8 NADH + 8 H(+)</text>
        <dbReference type="Rhea" id="RHEA:36039"/>
        <dbReference type="ChEBI" id="CHEBI:15378"/>
        <dbReference type="ChEBI" id="CHEBI:57540"/>
        <dbReference type="ChEBI" id="CHEBI:57945"/>
        <dbReference type="ChEBI" id="CHEBI:58837"/>
        <dbReference type="ChEBI" id="CHEBI:73125"/>
        <dbReference type="EC" id="1.3.1.101"/>
    </reaction>
    <physiologicalReaction direction="right-to-left" evidence="1">
        <dbReference type="Rhea" id="RHEA:36041"/>
    </physiologicalReaction>
</comment>
<comment type="catalytic activity">
    <reaction evidence="1">
        <text>a 2,3-bis-O-phytanyl-sn-glycerol 1-phospholipid + 8 A = a 2,3-bis-O-(geranylgeranyl)-sn-glycerol 1-phospholipid + 8 AH2</text>
        <dbReference type="Rhea" id="RHEA:64376"/>
        <dbReference type="ChEBI" id="CHEBI:13193"/>
        <dbReference type="ChEBI" id="CHEBI:17499"/>
        <dbReference type="ChEBI" id="CHEBI:138139"/>
        <dbReference type="ChEBI" id="CHEBI:138140"/>
    </reaction>
    <physiologicalReaction direction="right-to-left" evidence="1">
        <dbReference type="Rhea" id="RHEA:64378"/>
    </physiologicalReaction>
</comment>
<comment type="catalytic activity">
    <reaction evidence="1">
        <text>CDP-2,3-bis-O-(geranylgeranyl)-sn-glycerol + 8 AH2 = CDP-2,3-bis-O-(phytanyl)-sn-glycerol + 8 A</text>
        <dbReference type="Rhea" id="RHEA:84207"/>
        <dbReference type="ChEBI" id="CHEBI:13193"/>
        <dbReference type="ChEBI" id="CHEBI:17499"/>
        <dbReference type="ChEBI" id="CHEBI:58838"/>
        <dbReference type="ChEBI" id="CHEBI:74004"/>
    </reaction>
    <physiologicalReaction direction="left-to-right" evidence="1">
        <dbReference type="Rhea" id="RHEA:84208"/>
    </physiologicalReaction>
</comment>
<comment type="catalytic activity">
    <reaction evidence="1">
        <text>archaetidylserine + 8 AH2 = 2,3-bis-O-phytanyl-sn-glycero-3-phospho-L-serine + 8 A</text>
        <dbReference type="Rhea" id="RHEA:84215"/>
        <dbReference type="ChEBI" id="CHEBI:13193"/>
        <dbReference type="ChEBI" id="CHEBI:17499"/>
        <dbReference type="ChEBI" id="CHEBI:71517"/>
        <dbReference type="ChEBI" id="CHEBI:74853"/>
    </reaction>
    <physiologicalReaction direction="left-to-right" evidence="1">
        <dbReference type="Rhea" id="RHEA:84216"/>
    </physiologicalReaction>
</comment>
<comment type="cofactor">
    <cofactor evidence="1">
        <name>FAD</name>
        <dbReference type="ChEBI" id="CHEBI:57692"/>
    </cofactor>
    <text evidence="1">Binds 1 FAD per subunit.</text>
</comment>
<comment type="pathway">
    <text evidence="1">Membrane lipid metabolism; glycerophospholipid metabolism.</text>
</comment>
<comment type="miscellaneous">
    <text evidence="1">Reduction reaction proceeds via syn addition of hydrogen for double bonds.</text>
</comment>
<comment type="similarity">
    <text evidence="1">Belongs to the geranylgeranyl reductase family. DGGGPL reductase subfamily.</text>
</comment>
<dbReference type="EC" id="1.3.1.101" evidence="1"/>
<dbReference type="EMBL" id="AE017261">
    <property type="protein sequence ID" value="AAT43481.1"/>
    <property type="molecule type" value="Genomic_DNA"/>
</dbReference>
<dbReference type="RefSeq" id="WP_011177697.1">
    <property type="nucleotide sequence ID" value="NC_005877.1"/>
</dbReference>
<dbReference type="SMR" id="Q6L0M1"/>
<dbReference type="STRING" id="263820.PTO0896"/>
<dbReference type="PaxDb" id="263820-PTO0896"/>
<dbReference type="GeneID" id="2844118"/>
<dbReference type="KEGG" id="pto:PTO0896"/>
<dbReference type="PATRIC" id="fig|263820.9.peg.934"/>
<dbReference type="eggNOG" id="arCOG00570">
    <property type="taxonomic scope" value="Archaea"/>
</dbReference>
<dbReference type="HOGENOM" id="CLU_024648_0_0_2"/>
<dbReference type="InParanoid" id="Q6L0M1"/>
<dbReference type="OrthoDB" id="6062at2157"/>
<dbReference type="UniPathway" id="UPA00940"/>
<dbReference type="Proteomes" id="UP000000438">
    <property type="component" value="Chromosome"/>
</dbReference>
<dbReference type="GO" id="GO:0016020">
    <property type="term" value="C:membrane"/>
    <property type="evidence" value="ECO:0007669"/>
    <property type="project" value="GOC"/>
</dbReference>
<dbReference type="GO" id="GO:0050660">
    <property type="term" value="F:flavin adenine dinucleotide binding"/>
    <property type="evidence" value="ECO:0007669"/>
    <property type="project" value="UniProtKB-UniRule"/>
</dbReference>
<dbReference type="GO" id="GO:0045550">
    <property type="term" value="F:geranylgeranyl reductase activity"/>
    <property type="evidence" value="ECO:0007669"/>
    <property type="project" value="InterPro"/>
</dbReference>
<dbReference type="GO" id="GO:0051287">
    <property type="term" value="F:NAD binding"/>
    <property type="evidence" value="ECO:0007669"/>
    <property type="project" value="UniProtKB-UniRule"/>
</dbReference>
<dbReference type="GO" id="GO:0050661">
    <property type="term" value="F:NADP binding"/>
    <property type="evidence" value="ECO:0007669"/>
    <property type="project" value="UniProtKB-UniRule"/>
</dbReference>
<dbReference type="GO" id="GO:0016628">
    <property type="term" value="F:oxidoreductase activity, acting on the CH-CH group of donors, NAD or NADP as acceptor"/>
    <property type="evidence" value="ECO:0007669"/>
    <property type="project" value="UniProtKB-UniRule"/>
</dbReference>
<dbReference type="GO" id="GO:0046474">
    <property type="term" value="P:glycerophospholipid biosynthetic process"/>
    <property type="evidence" value="ECO:0007669"/>
    <property type="project" value="UniProtKB-UniRule"/>
</dbReference>
<dbReference type="GO" id="GO:0046467">
    <property type="term" value="P:membrane lipid biosynthetic process"/>
    <property type="evidence" value="ECO:0007669"/>
    <property type="project" value="InterPro"/>
</dbReference>
<dbReference type="Gene3D" id="3.30.9.10">
    <property type="entry name" value="D-Amino Acid Oxidase, subunit A, domain 2"/>
    <property type="match status" value="1"/>
</dbReference>
<dbReference type="Gene3D" id="3.50.50.60">
    <property type="entry name" value="FAD/NAD(P)-binding domain"/>
    <property type="match status" value="1"/>
</dbReference>
<dbReference type="HAMAP" id="MF_01287">
    <property type="entry name" value="DGGGPL_reductase"/>
    <property type="match status" value="1"/>
</dbReference>
<dbReference type="InterPro" id="IPR023590">
    <property type="entry name" value="DGGGPL_reductase"/>
</dbReference>
<dbReference type="InterPro" id="IPR054984">
    <property type="entry name" value="DGGPL_reductase"/>
</dbReference>
<dbReference type="InterPro" id="IPR036188">
    <property type="entry name" value="FAD/NAD-bd_sf"/>
</dbReference>
<dbReference type="InterPro" id="IPR011777">
    <property type="entry name" value="Geranylgeranyl_Rdtase_fam"/>
</dbReference>
<dbReference type="InterPro" id="IPR050407">
    <property type="entry name" value="Geranylgeranyl_reductase"/>
</dbReference>
<dbReference type="InterPro" id="IPR054715">
    <property type="entry name" value="GGR_cat"/>
</dbReference>
<dbReference type="NCBIfam" id="NF041160">
    <property type="entry name" value="DGGPL_Thplmales"/>
    <property type="match status" value="1"/>
</dbReference>
<dbReference type="NCBIfam" id="TIGR02032">
    <property type="entry name" value="GG-red-SF"/>
    <property type="match status" value="1"/>
</dbReference>
<dbReference type="PANTHER" id="PTHR42685:SF18">
    <property type="entry name" value="DIGERANYLGERANYLGLYCEROPHOSPHOLIPID REDUCTASE"/>
    <property type="match status" value="1"/>
</dbReference>
<dbReference type="PANTHER" id="PTHR42685">
    <property type="entry name" value="GERANYLGERANYL DIPHOSPHATE REDUCTASE"/>
    <property type="match status" value="1"/>
</dbReference>
<dbReference type="Pfam" id="PF12831">
    <property type="entry name" value="FAD_oxidored"/>
    <property type="match status" value="1"/>
</dbReference>
<dbReference type="Pfam" id="PF22578">
    <property type="entry name" value="GGR_cat"/>
    <property type="match status" value="1"/>
</dbReference>
<dbReference type="PRINTS" id="PR00420">
    <property type="entry name" value="RNGMNOXGNASE"/>
</dbReference>
<dbReference type="SUPFAM" id="SSF51905">
    <property type="entry name" value="FAD/NAD(P)-binding domain"/>
    <property type="match status" value="1"/>
</dbReference>
<accession>Q6L0M1</accession>
<evidence type="ECO:0000255" key="1">
    <source>
        <dbReference type="HAMAP-Rule" id="MF_01287"/>
    </source>
</evidence>
<keyword id="KW-0274">FAD</keyword>
<keyword id="KW-0285">Flavoprotein</keyword>
<keyword id="KW-0444">Lipid biosynthesis</keyword>
<keyword id="KW-0443">Lipid metabolism</keyword>
<keyword id="KW-0520">NAD</keyword>
<keyword id="KW-0521">NADP</keyword>
<keyword id="KW-0560">Oxidoreductase</keyword>
<keyword id="KW-0594">Phospholipid biosynthesis</keyword>
<keyword id="KW-1208">Phospholipid metabolism</keyword>